<comment type="function">
    <text evidence="1">Involved in the import of serine and threonine into the cell, with the concomitant import of sodium (symport system).</text>
</comment>
<comment type="catalytic activity">
    <reaction evidence="1">
        <text>L-serine(in) + Na(+)(in) = L-serine(out) + Na(+)(out)</text>
        <dbReference type="Rhea" id="RHEA:29575"/>
        <dbReference type="ChEBI" id="CHEBI:29101"/>
        <dbReference type="ChEBI" id="CHEBI:33384"/>
    </reaction>
    <physiologicalReaction direction="right-to-left" evidence="1">
        <dbReference type="Rhea" id="RHEA:29577"/>
    </physiologicalReaction>
</comment>
<comment type="catalytic activity">
    <reaction evidence="1">
        <text>L-threonine(in) + Na(+)(in) = L-threonine(out) + Na(+)(out)</text>
        <dbReference type="Rhea" id="RHEA:69999"/>
        <dbReference type="ChEBI" id="CHEBI:29101"/>
        <dbReference type="ChEBI" id="CHEBI:57926"/>
    </reaction>
    <physiologicalReaction direction="right-to-left" evidence="1">
        <dbReference type="Rhea" id="RHEA:70001"/>
    </physiologicalReaction>
</comment>
<comment type="subcellular location">
    <subcellularLocation>
        <location evidence="1">Cell inner membrane</location>
        <topology evidence="1">Multi-pass membrane protein</topology>
    </subcellularLocation>
</comment>
<comment type="similarity">
    <text evidence="1">Belongs to the dicarboxylate/amino acid:cation symporter (DAACS) (TC 2.A.23) family.</text>
</comment>
<evidence type="ECO:0000255" key="1">
    <source>
        <dbReference type="HAMAP-Rule" id="MF_01582"/>
    </source>
</evidence>
<reference key="1">
    <citation type="submission" date="2007-11" db="EMBL/GenBank/DDBJ databases">
        <authorList>
            <consortium name="The Salmonella enterica serovar Arizonae Genome Sequencing Project"/>
            <person name="McClelland M."/>
            <person name="Sanderson E.K."/>
            <person name="Porwollik S."/>
            <person name="Spieth J."/>
            <person name="Clifton W.S."/>
            <person name="Fulton R."/>
            <person name="Chunyan W."/>
            <person name="Wollam A."/>
            <person name="Shah N."/>
            <person name="Pepin K."/>
            <person name="Bhonagiri V."/>
            <person name="Nash W."/>
            <person name="Johnson M."/>
            <person name="Thiruvilangam P."/>
            <person name="Wilson R."/>
        </authorList>
    </citation>
    <scope>NUCLEOTIDE SEQUENCE [LARGE SCALE GENOMIC DNA]</scope>
    <source>
        <strain>ATCC BAA-731 / CDC346-86 / RSK2980</strain>
    </source>
</reference>
<keyword id="KW-0029">Amino-acid transport</keyword>
<keyword id="KW-0997">Cell inner membrane</keyword>
<keyword id="KW-1003">Cell membrane</keyword>
<keyword id="KW-0472">Membrane</keyword>
<keyword id="KW-1185">Reference proteome</keyword>
<keyword id="KW-0769">Symport</keyword>
<keyword id="KW-0812">Transmembrane</keyword>
<keyword id="KW-1133">Transmembrane helix</keyword>
<keyword id="KW-0813">Transport</keyword>
<dbReference type="EMBL" id="CP000880">
    <property type="protein sequence ID" value="ABX24181.1"/>
    <property type="molecule type" value="Genomic_DNA"/>
</dbReference>
<dbReference type="SMR" id="A9MPT8"/>
<dbReference type="STRING" id="41514.SARI_04403"/>
<dbReference type="KEGG" id="ses:SARI_04403"/>
<dbReference type="HOGENOM" id="CLU_044581_0_0_6"/>
<dbReference type="Proteomes" id="UP000002084">
    <property type="component" value="Chromosome"/>
</dbReference>
<dbReference type="GO" id="GO:0005886">
    <property type="term" value="C:plasma membrane"/>
    <property type="evidence" value="ECO:0007669"/>
    <property type="project" value="UniProtKB-SubCell"/>
</dbReference>
<dbReference type="GO" id="GO:0005295">
    <property type="term" value="F:neutral L-amino acid:sodium symporter activity"/>
    <property type="evidence" value="ECO:0007669"/>
    <property type="project" value="TreeGrafter"/>
</dbReference>
<dbReference type="GO" id="GO:0032329">
    <property type="term" value="P:serine transport"/>
    <property type="evidence" value="ECO:0007669"/>
    <property type="project" value="InterPro"/>
</dbReference>
<dbReference type="GO" id="GO:0015826">
    <property type="term" value="P:threonine transport"/>
    <property type="evidence" value="ECO:0007669"/>
    <property type="project" value="InterPro"/>
</dbReference>
<dbReference type="FunFam" id="1.10.3860.10:FF:000003">
    <property type="entry name" value="Serine/threonine transporter sstT"/>
    <property type="match status" value="1"/>
</dbReference>
<dbReference type="Gene3D" id="1.10.3860.10">
    <property type="entry name" value="Sodium:dicarboxylate symporter"/>
    <property type="match status" value="1"/>
</dbReference>
<dbReference type="HAMAP" id="MF_01582">
    <property type="entry name" value="Ser_Thr_transp_SstT"/>
    <property type="match status" value="1"/>
</dbReference>
<dbReference type="InterPro" id="IPR001991">
    <property type="entry name" value="Na-dicarboxylate_symporter"/>
</dbReference>
<dbReference type="InterPro" id="IPR036458">
    <property type="entry name" value="Na:dicarbo_symporter_sf"/>
</dbReference>
<dbReference type="InterPro" id="IPR023025">
    <property type="entry name" value="Ser_Thr_transp_SstT"/>
</dbReference>
<dbReference type="NCBIfam" id="NF010151">
    <property type="entry name" value="PRK13628.1"/>
    <property type="match status" value="1"/>
</dbReference>
<dbReference type="PANTHER" id="PTHR42865">
    <property type="entry name" value="PROTON/GLUTAMATE-ASPARTATE SYMPORTER"/>
    <property type="match status" value="1"/>
</dbReference>
<dbReference type="PANTHER" id="PTHR42865:SF8">
    <property type="entry name" value="SERINE_THREONINE TRANSPORTER SSTT"/>
    <property type="match status" value="1"/>
</dbReference>
<dbReference type="Pfam" id="PF00375">
    <property type="entry name" value="SDF"/>
    <property type="match status" value="1"/>
</dbReference>
<dbReference type="PRINTS" id="PR00173">
    <property type="entry name" value="EDTRNSPORT"/>
</dbReference>
<dbReference type="SUPFAM" id="SSF118215">
    <property type="entry name" value="Proton glutamate symport protein"/>
    <property type="match status" value="1"/>
</dbReference>
<dbReference type="PROSITE" id="PS00713">
    <property type="entry name" value="NA_DICARBOXYL_SYMP_1"/>
    <property type="match status" value="1"/>
</dbReference>
<organism>
    <name type="scientific">Salmonella arizonae (strain ATCC BAA-731 / CDC346-86 / RSK2980)</name>
    <dbReference type="NCBI Taxonomy" id="41514"/>
    <lineage>
        <taxon>Bacteria</taxon>
        <taxon>Pseudomonadati</taxon>
        <taxon>Pseudomonadota</taxon>
        <taxon>Gammaproteobacteria</taxon>
        <taxon>Enterobacterales</taxon>
        <taxon>Enterobacteriaceae</taxon>
        <taxon>Salmonella</taxon>
    </lineage>
</organism>
<proteinExistence type="inferred from homology"/>
<sequence>MATQRASGLLQRLAQGSLVKQILVGLVLGILLAWVSKPAAEAVGLLGTLFVGALKAVAPILVLMLVMASIANHQHGQKTNIRPILFLYLLGTFSAALAAVVFSFAFPSTLHLSSSAQDIVPPSGIVEVLRGLLISMVSNPIDALLNANYIGILVWAVGLGFALRHGNETTKNLVNDMSNAVTFMVKLVIRFAPVGIFGLVSSTLATTGFSTLWGYAHLLVVLIGCMLLVALVVNPLLVFWKIRRNPYPLVFACLRESGVYAFFTRSSAANIPVNMALCEKLNLDRDTYSVSIPLGATINMAGAAITITVLTLAAVHTLGVPVDLPTALLLSVVASLCACGASGVAGGSLLLIPLACNMFGIPNDIAMQVVAVGFIIGVLQDSCETALNSSTDVLFTAAACQAEDERLANNALRS</sequence>
<protein>
    <recommendedName>
        <fullName evidence="1">Serine/threonine transporter SstT</fullName>
    </recommendedName>
    <alternativeName>
        <fullName evidence="1">Na(+)/serine-threonine symporter</fullName>
    </alternativeName>
</protein>
<accession>A9MPT8</accession>
<feature type="chain" id="PRO_1000087937" description="Serine/threonine transporter SstT">
    <location>
        <begin position="1"/>
        <end position="414"/>
    </location>
</feature>
<feature type="transmembrane region" description="Helical" evidence="1">
    <location>
        <begin position="16"/>
        <end position="36"/>
    </location>
</feature>
<feature type="transmembrane region" description="Helical" evidence="1">
    <location>
        <begin position="46"/>
        <end position="66"/>
    </location>
</feature>
<feature type="transmembrane region" description="Helical" evidence="1">
    <location>
        <begin position="84"/>
        <end position="104"/>
    </location>
</feature>
<feature type="transmembrane region" description="Helical" evidence="1">
    <location>
        <begin position="143"/>
        <end position="163"/>
    </location>
</feature>
<feature type="transmembrane region" description="Helical" evidence="1">
    <location>
        <begin position="180"/>
        <end position="200"/>
    </location>
</feature>
<feature type="transmembrane region" description="Helical" evidence="1">
    <location>
        <begin position="219"/>
        <end position="239"/>
    </location>
</feature>
<feature type="transmembrane region" description="Helical" evidence="1">
    <location>
        <begin position="300"/>
        <end position="320"/>
    </location>
</feature>
<feature type="transmembrane region" description="Helical" evidence="1">
    <location>
        <begin position="332"/>
        <end position="352"/>
    </location>
</feature>
<name>SSTT_SALAR</name>
<gene>
    <name evidence="1" type="primary">sstT</name>
    <name type="ordered locus">SARI_04403</name>
</gene>